<proteinExistence type="evidence at protein level"/>
<dbReference type="EC" id="1.14.14.118" evidence="6"/>
<dbReference type="EMBL" id="AB436628">
    <property type="protein sequence ID" value="BAH23996.1"/>
    <property type="molecule type" value="Genomic_DNA"/>
</dbReference>
<dbReference type="SMR" id="B9WZX1"/>
<dbReference type="OMA" id="KRIQVYR"/>
<dbReference type="BioCyc" id="MetaCyc:MONOMER-18764"/>
<dbReference type="BRENDA" id="1.14.14.118">
    <property type="organism ID" value="508"/>
</dbReference>
<dbReference type="GO" id="GO:0016020">
    <property type="term" value="C:membrane"/>
    <property type="evidence" value="ECO:0007669"/>
    <property type="project" value="UniProtKB-SubCell"/>
</dbReference>
<dbReference type="GO" id="GO:0020037">
    <property type="term" value="F:heme binding"/>
    <property type="evidence" value="ECO:0007669"/>
    <property type="project" value="InterPro"/>
</dbReference>
<dbReference type="GO" id="GO:0005506">
    <property type="term" value="F:iron ion binding"/>
    <property type="evidence" value="ECO:0007669"/>
    <property type="project" value="InterPro"/>
</dbReference>
<dbReference type="GO" id="GO:0004497">
    <property type="term" value="F:monooxygenase activity"/>
    <property type="evidence" value="ECO:0007669"/>
    <property type="project" value="UniProtKB-KW"/>
</dbReference>
<dbReference type="GO" id="GO:0016705">
    <property type="term" value="F:oxidoreductase activity, acting on paired donors, with incorporation or reduction of molecular oxygen"/>
    <property type="evidence" value="ECO:0007669"/>
    <property type="project" value="InterPro"/>
</dbReference>
<dbReference type="GO" id="GO:1902181">
    <property type="term" value="P:verruculogen biosynthetic process"/>
    <property type="evidence" value="ECO:0000314"/>
    <property type="project" value="GO_Central"/>
</dbReference>
<dbReference type="CDD" id="cd11061">
    <property type="entry name" value="CYP67-like"/>
    <property type="match status" value="1"/>
</dbReference>
<dbReference type="FunFam" id="1.10.630.10:FF:000063">
    <property type="entry name" value="Cytochrome P450 monooxygenase"/>
    <property type="match status" value="1"/>
</dbReference>
<dbReference type="Gene3D" id="1.10.630.10">
    <property type="entry name" value="Cytochrome P450"/>
    <property type="match status" value="1"/>
</dbReference>
<dbReference type="InterPro" id="IPR001128">
    <property type="entry name" value="Cyt_P450"/>
</dbReference>
<dbReference type="InterPro" id="IPR002401">
    <property type="entry name" value="Cyt_P450_E_grp-I"/>
</dbReference>
<dbReference type="InterPro" id="IPR036396">
    <property type="entry name" value="Cyt_P450_sf"/>
</dbReference>
<dbReference type="InterPro" id="IPR050121">
    <property type="entry name" value="Cytochrome_P450_monoxygenase"/>
</dbReference>
<dbReference type="PANTHER" id="PTHR24305">
    <property type="entry name" value="CYTOCHROME P450"/>
    <property type="match status" value="1"/>
</dbReference>
<dbReference type="PANTHER" id="PTHR24305:SF112">
    <property type="entry name" value="L-ORNITHINE-N5-MONOOXYGENASE (EUROFUNG)"/>
    <property type="match status" value="1"/>
</dbReference>
<dbReference type="Pfam" id="PF00067">
    <property type="entry name" value="p450"/>
    <property type="match status" value="1"/>
</dbReference>
<dbReference type="PRINTS" id="PR00463">
    <property type="entry name" value="EP450I"/>
</dbReference>
<dbReference type="PRINTS" id="PR00385">
    <property type="entry name" value="P450"/>
</dbReference>
<dbReference type="SUPFAM" id="SSF48264">
    <property type="entry name" value="Cytochrome P450"/>
    <property type="match status" value="1"/>
</dbReference>
<comment type="function">
    <text evidence="3 4 5 6 7 8 9 10 13 14">Cytochrome P450 monooxygenase; part of the gene cluster that mediates the biosynthesis of fumitremorgins, indole alkaloids that carry not only intriguing chemical structures, but also interesting biological and pharmacological activities (PubMed:19226505, PubMed:23649274). The biosynthesis of fumitremorgin-type alkaloids begins by condensation of the two amino acids L-tryptophan and L-proline to brevianamide F, catalyzed by the non-ribosomal peptide synthetase ftmA (PubMed:16755625). Brevianamide F is then prenylated by the prenyltransferase ftmPT1/ftmB in the presence of dimethylallyl diphosphate, resulting in the formation of tryprostatin B (PubMed:16000710, PubMed:21105662, PubMed:23090579). The three cytochrome P450 monooxygenases, ftmP450-1/ftmC, ftmP450-2/ftmE and ftmP450-3/FtmG, are responsible for the conversion of tryprostatin B to 6-hydroxytryprostatin B, tryprostatin A to fumitremorgin C and fumitremorgin C to 12,13-dihydroxyfumitremorgin C, respectively (PubMed:19226505). The putative methyltransferase ftmMT/ftmD is expected for the conversion of 6-hydroxytryprostatin B to tryprostatin A (Probable). FtmPT2/FtmH catalyzes the prenylation of 12,13-dihydroxyfumitre-morgin C in the presence of dimethylallyl diphosphate, resulting in the formation of fumitremorgin B (PubMed:18683158). Fumitremorgin B is further converted to verruculogen by ftmOx1/ftmF via the insertion of an endoperoxide bond between the two prenyl moieties (PubMed:19763315). In some fungal species, verruculogen is further converted to fumitremorgin A, but the enzymes involved in this step have not been identified yet (Probable).</text>
</comment>
<comment type="catalytic activity">
    <reaction evidence="6">
        <text>tryprostatin B + reduced [NADPH--hemoprotein reductase] + O2 = 6-hydroxytryprostatin B + oxidized [NADPH--hemoprotein reductase] + H2O + H(+)</text>
        <dbReference type="Rhea" id="RHEA:35955"/>
        <dbReference type="Rhea" id="RHEA-COMP:11964"/>
        <dbReference type="Rhea" id="RHEA-COMP:11965"/>
        <dbReference type="ChEBI" id="CHEBI:15377"/>
        <dbReference type="ChEBI" id="CHEBI:15378"/>
        <dbReference type="ChEBI" id="CHEBI:15379"/>
        <dbReference type="ChEBI" id="CHEBI:57618"/>
        <dbReference type="ChEBI" id="CHEBI:58210"/>
        <dbReference type="ChEBI" id="CHEBI:72760"/>
        <dbReference type="ChEBI" id="CHEBI:72762"/>
        <dbReference type="EC" id="1.14.14.118"/>
    </reaction>
</comment>
<comment type="cofactor">
    <cofactor evidence="1">
        <name>heme</name>
        <dbReference type="ChEBI" id="CHEBI:30413"/>
    </cofactor>
</comment>
<comment type="pathway">
    <text evidence="6 10">Mycotoxin biosynthesis.</text>
</comment>
<comment type="subcellular location">
    <subcellularLocation>
        <location evidence="2">Membrane</location>
        <topology evidence="2">Multi-pass membrane protein</topology>
    </subcellularLocation>
</comment>
<comment type="similarity">
    <text evidence="13">Belongs to the cytochrome P450 family.</text>
</comment>
<evidence type="ECO:0000250" key="1">
    <source>
        <dbReference type="UniProtKB" id="P04798"/>
    </source>
</evidence>
<evidence type="ECO:0000255" key="2"/>
<evidence type="ECO:0000269" key="3">
    <source>
    </source>
</evidence>
<evidence type="ECO:0000269" key="4">
    <source>
    </source>
</evidence>
<evidence type="ECO:0000269" key="5">
    <source>
    </source>
</evidence>
<evidence type="ECO:0000269" key="6">
    <source>
    </source>
</evidence>
<evidence type="ECO:0000269" key="7">
    <source>
    </source>
</evidence>
<evidence type="ECO:0000269" key="8">
    <source>
    </source>
</evidence>
<evidence type="ECO:0000269" key="9">
    <source>
    </source>
</evidence>
<evidence type="ECO:0000269" key="10">
    <source>
    </source>
</evidence>
<evidence type="ECO:0000303" key="11">
    <source>
    </source>
</evidence>
<evidence type="ECO:0000303" key="12">
    <source>
    </source>
</evidence>
<evidence type="ECO:0000305" key="13"/>
<evidence type="ECO:0000305" key="14">
    <source>
    </source>
</evidence>
<protein>
    <recommendedName>
        <fullName evidence="11">Tryprostatin B 6-hydroxylase</fullName>
        <ecNumber evidence="6">1.14.14.118</ecNumber>
    </recommendedName>
    <alternativeName>
        <fullName evidence="11">Cytochrome P450 monooxygenase ftmP450-1</fullName>
    </alternativeName>
    <alternativeName>
        <fullName evidence="12">Fumitremorgin biosynthesis protein C</fullName>
    </alternativeName>
</protein>
<gene>
    <name evidence="11" type="primary">ftmP450-1</name>
    <name evidence="12" type="synonym">ftmC</name>
</gene>
<organism>
    <name type="scientific">Aspergillus fumigatus</name>
    <name type="common">Neosartorya fumigata</name>
    <dbReference type="NCBI Taxonomy" id="746128"/>
    <lineage>
        <taxon>Eukaryota</taxon>
        <taxon>Fungi</taxon>
        <taxon>Dikarya</taxon>
        <taxon>Ascomycota</taxon>
        <taxon>Pezizomycotina</taxon>
        <taxon>Eurotiomycetes</taxon>
        <taxon>Eurotiomycetidae</taxon>
        <taxon>Eurotiales</taxon>
        <taxon>Aspergillaceae</taxon>
        <taxon>Aspergillus</taxon>
        <taxon>Aspergillus subgen. Fumigati</taxon>
    </lineage>
</organism>
<keyword id="KW-0017">Alkaloid metabolism</keyword>
<keyword id="KW-0349">Heme</keyword>
<keyword id="KW-0408">Iron</keyword>
<keyword id="KW-0472">Membrane</keyword>
<keyword id="KW-0479">Metal-binding</keyword>
<keyword id="KW-0503">Monooxygenase</keyword>
<keyword id="KW-0560">Oxidoreductase</keyword>
<keyword id="KW-0812">Transmembrane</keyword>
<keyword id="KW-1133">Transmembrane helix</keyword>
<keyword id="KW-0843">Virulence</keyword>
<accession>B9WZX1</accession>
<sequence>MKPSHSDTPLMMPSVMKCGYLATAGLIGICTHLSYFRYGEHHLYPWRYVRFHLCLTMGVAALLYAKKPPQYTLCSMDLVKDVSLLMATYLVGLFASLLLYRTLFHPLRQIRGPWAAKISSFWLSFRLRRGPSFRILHELHEEYGPVVRVGPSEVSIIHPEAVRMIYGPNSRCSKNTFYDNGHPMMSLHSYRDRIAHDQRRRVWSAGFGDRALRGYEQRMRVYRQKLFQRLEARAVAESAINISQWFNFYSYDTMGDLAFARSFDMLDASRNHWAVDMLMHGMIGYRYLFPSWFFRLLATMPSLSSDWHKFIGFATDTMLRRVGEQVDVPDIFASLLAPLNGREPTEDERNMLMGDAMLIITAGSDTTATSLTSIVYELARHLDEVDKLRAELDPIEADSDGEYQHDTLAKLPHLNGFINETLRLHPPIPGVIPRKTPPEGIHVKDVFIPGNMTVFSPQWSMGRSEAAYIDPEIFNPERWYKHMDLVKDPSAFAPFSIGPYSCIGKPLALMNIRTTVARLIMSFDVRFPEGEDGIRWMDAADEHFAMGIHQMPVVLTRRH</sequence>
<name>FTMC_ASPFM</name>
<reference key="1">
    <citation type="journal article" date="2009" name="ChemBioChem">
        <title>Identification of cytochrome P450s required for fumitremorgin biosynthesis in Aspergillus fumigatus.</title>
        <authorList>
            <person name="Kato N."/>
            <person name="Suzuki H."/>
            <person name="Takagi H."/>
            <person name="Asami Y."/>
            <person name="Kakeya H."/>
            <person name="Uramoto M."/>
            <person name="Usui T."/>
            <person name="Takahashi S."/>
            <person name="Sugimoto Y."/>
            <person name="Osada H."/>
        </authorList>
    </citation>
    <scope>NUCLEOTIDE SEQUENCE [GENOMIC DNA]</scope>
    <scope>FUNCTION</scope>
    <scope>CATALYTIC ACTIVITY</scope>
    <scope>PATHWAY</scope>
    <source>
        <strain>BM939</strain>
    </source>
</reference>
<reference key="2">
    <citation type="journal article" date="2005" name="Microbiology">
        <title>Overproduction, purification and characterization of FtmPT1, a brevianamide F prenyltransferase from Aspergillus fumigatus.</title>
        <authorList>
            <person name="Grundmann A."/>
            <person name="Li S.M."/>
        </authorList>
    </citation>
    <scope>FUNCTION</scope>
</reference>
<reference key="3">
    <citation type="journal article" date="2006" name="ChemBioChem">
        <title>The fumitremorgin gene cluster of Aspergillus fumigatus: identification of a gene encoding brevianamide F synthetase.</title>
        <authorList>
            <person name="Maiya S."/>
            <person name="Grundmann A."/>
            <person name="Li S.M."/>
            <person name="Turner G."/>
        </authorList>
    </citation>
    <scope>FUNCTION</scope>
</reference>
<reference key="4">
    <citation type="journal article" date="2008" name="ChemBioChem">
        <title>FtmPT2, an N-prenyltransferase from Aspergillus fumigatus, catalyses the last step in the biosynthesis of fumitremorgin B.</title>
        <authorList>
            <person name="Grundmann A."/>
            <person name="Kuznetsova T."/>
            <person name="Afiyatullov S.S."/>
            <person name="Li S.M."/>
        </authorList>
    </citation>
    <scope>FUNCTION</scope>
</reference>
<reference key="5">
    <citation type="journal article" date="2009" name="Org. Biomol. Chem.">
        <title>FtmOx1, a non-heme Fe(II) and alpha-ketoglutarate-dependent dioxygenase, catalyses the endoperoxide formation of verruculogen in Aspergillus fumigatus.</title>
        <authorList>
            <person name="Steffan N."/>
            <person name="Grundmann A."/>
            <person name="Afiyatullov S."/>
            <person name="Ruan H."/>
            <person name="Li S.M."/>
        </authorList>
    </citation>
    <scope>FUNCTION</scope>
</reference>
<reference key="6">
    <citation type="journal article" date="2010" name="J. Am. Chem. Soc.">
        <title>Structure-function analysis of an enzymatic prenyl transfer reaction identifies a reaction chamber with modifiable specificity.</title>
        <authorList>
            <person name="Jost M."/>
            <person name="Zocher G."/>
            <person name="Tarcz S."/>
            <person name="Matuschek M."/>
            <person name="Xie X."/>
            <person name="Li S.M."/>
            <person name="Stehle T."/>
        </authorList>
    </citation>
    <scope>FUNCTION</scope>
</reference>
<reference key="7">
    <citation type="journal article" date="2012" name="Org. Biomol. Chem.">
        <title>Breaking the regioselectivity of indole prenyltransferases: identification of regular C3-prenylated hexahydropyrrolo[2,3-b]indoles as side products of the regular C2-prenyltransferase FtmPT1.</title>
        <authorList>
            <person name="Wollinsky B."/>
            <person name="Ludwig L."/>
            <person name="Xie X."/>
            <person name="Li S.M."/>
        </authorList>
    </citation>
    <scope>FUNCTION</scope>
</reference>
<reference key="8">
    <citation type="journal article" date="2013" name="Biosci. Biotechnol. Biochem.">
        <title>A point mutation in ftmD blocks the fumitremorgin biosynthetic pathway in Aspergillus fumigatus strain Af293.</title>
        <authorList>
            <person name="Kato N."/>
            <person name="Suzuki H."/>
            <person name="Okumura H."/>
            <person name="Takahashi S."/>
            <person name="Osada H."/>
        </authorList>
    </citation>
    <scope>FUNCTION</scope>
    <scope>PATHWAY</scope>
</reference>
<feature type="chain" id="PRO_0000424119" description="Tryprostatin B 6-hydroxylase">
    <location>
        <begin position="1"/>
        <end position="559"/>
    </location>
</feature>
<feature type="transmembrane region" description="Helical" evidence="2">
    <location>
        <begin position="13"/>
        <end position="35"/>
    </location>
</feature>
<feature type="transmembrane region" description="Helical" evidence="2">
    <location>
        <begin position="48"/>
        <end position="65"/>
    </location>
</feature>
<feature type="transmembrane region" description="Helical" evidence="2">
    <location>
        <begin position="82"/>
        <end position="104"/>
    </location>
</feature>
<feature type="binding site" description="axial binding residue" evidence="1">
    <location>
        <position position="502"/>
    </location>
    <ligand>
        <name>heme</name>
        <dbReference type="ChEBI" id="CHEBI:30413"/>
    </ligand>
    <ligandPart>
        <name>Fe</name>
        <dbReference type="ChEBI" id="CHEBI:18248"/>
    </ligandPart>
</feature>